<keyword id="KW-0963">Cytoplasm</keyword>
<keyword id="KW-0479">Metal-binding</keyword>
<keyword id="KW-0520">NAD</keyword>
<keyword id="KW-0560">Oxidoreductase</keyword>
<keyword id="KW-0862">Zinc</keyword>
<evidence type="ECO:0000255" key="1">
    <source>
        <dbReference type="HAMAP-Rule" id="MF_00627"/>
    </source>
</evidence>
<organism>
    <name type="scientific">Xanthomonas campestris pv. campestris (strain 8004)</name>
    <dbReference type="NCBI Taxonomy" id="314565"/>
    <lineage>
        <taxon>Bacteria</taxon>
        <taxon>Pseudomonadati</taxon>
        <taxon>Pseudomonadota</taxon>
        <taxon>Gammaproteobacteria</taxon>
        <taxon>Lysobacterales</taxon>
        <taxon>Lysobacteraceae</taxon>
        <taxon>Xanthomonas</taxon>
    </lineage>
</organism>
<proteinExistence type="inferred from homology"/>
<sequence>MKALVKREASKGIWLEQVPVPTPGPNEVLIKLEKTAICGTDLHIYLWDEWSQRTITPGLTIGHEFVGRVAELGSAVTGYQVGQRVSAEGHIVCGHCRNCRGGRPHLCPNTVGIGVNVNGAFAEYMVMPASNLWPIPDQIPSELAAFFDPYGNAAHCALEFDVIGEDVLITGAGPIGIIAAGICKHIGARNVVVTDVNDFRLKLAADLGATRVVNVSKTSLKDVMADLHMEGFDVGLEMSGNPRAFNDMLDCMYHGGKIAMLGIMPRGAGCDWDKIIFKGLTVQGIYGRKMYETWYKMTQLVLSGFPLQKVLTHQLSIDEFQKGFDLMEEGKAGKVVLSWN</sequence>
<feature type="chain" id="PRO_1000051668" description="L-threonine 3-dehydrogenase">
    <location>
        <begin position="1"/>
        <end position="340"/>
    </location>
</feature>
<feature type="active site" description="Charge relay system" evidence="1">
    <location>
        <position position="40"/>
    </location>
</feature>
<feature type="active site" description="Charge relay system" evidence="1">
    <location>
        <position position="43"/>
    </location>
</feature>
<feature type="binding site" evidence="1">
    <location>
        <position position="38"/>
    </location>
    <ligand>
        <name>Zn(2+)</name>
        <dbReference type="ChEBI" id="CHEBI:29105"/>
        <label>1</label>
        <note>catalytic</note>
    </ligand>
</feature>
<feature type="binding site" evidence="1">
    <location>
        <position position="63"/>
    </location>
    <ligand>
        <name>Zn(2+)</name>
        <dbReference type="ChEBI" id="CHEBI:29105"/>
        <label>1</label>
        <note>catalytic</note>
    </ligand>
</feature>
<feature type="binding site" evidence="1">
    <location>
        <position position="64"/>
    </location>
    <ligand>
        <name>Zn(2+)</name>
        <dbReference type="ChEBI" id="CHEBI:29105"/>
        <label>1</label>
        <note>catalytic</note>
    </ligand>
</feature>
<feature type="binding site" evidence="1">
    <location>
        <position position="93"/>
    </location>
    <ligand>
        <name>Zn(2+)</name>
        <dbReference type="ChEBI" id="CHEBI:29105"/>
        <label>2</label>
    </ligand>
</feature>
<feature type="binding site" evidence="1">
    <location>
        <position position="96"/>
    </location>
    <ligand>
        <name>Zn(2+)</name>
        <dbReference type="ChEBI" id="CHEBI:29105"/>
        <label>2</label>
    </ligand>
</feature>
<feature type="binding site" evidence="1">
    <location>
        <position position="99"/>
    </location>
    <ligand>
        <name>Zn(2+)</name>
        <dbReference type="ChEBI" id="CHEBI:29105"/>
        <label>2</label>
    </ligand>
</feature>
<feature type="binding site" evidence="1">
    <location>
        <position position="107"/>
    </location>
    <ligand>
        <name>Zn(2+)</name>
        <dbReference type="ChEBI" id="CHEBI:29105"/>
        <label>2</label>
    </ligand>
</feature>
<feature type="binding site" evidence="1">
    <location>
        <position position="175"/>
    </location>
    <ligand>
        <name>NAD(+)</name>
        <dbReference type="ChEBI" id="CHEBI:57540"/>
    </ligand>
</feature>
<feature type="binding site" evidence="1">
    <location>
        <position position="195"/>
    </location>
    <ligand>
        <name>NAD(+)</name>
        <dbReference type="ChEBI" id="CHEBI:57540"/>
    </ligand>
</feature>
<feature type="binding site" evidence="1">
    <location>
        <position position="200"/>
    </location>
    <ligand>
        <name>NAD(+)</name>
        <dbReference type="ChEBI" id="CHEBI:57540"/>
    </ligand>
</feature>
<feature type="binding site" evidence="1">
    <location>
        <begin position="261"/>
        <end position="263"/>
    </location>
    <ligand>
        <name>NAD(+)</name>
        <dbReference type="ChEBI" id="CHEBI:57540"/>
    </ligand>
</feature>
<feature type="binding site" evidence="1">
    <location>
        <begin position="285"/>
        <end position="286"/>
    </location>
    <ligand>
        <name>NAD(+)</name>
        <dbReference type="ChEBI" id="CHEBI:57540"/>
    </ligand>
</feature>
<feature type="site" description="Important for catalytic activity for the proton relay mechanism but does not participate directly in the coordination of zinc atom" evidence="1">
    <location>
        <position position="148"/>
    </location>
</feature>
<protein>
    <recommendedName>
        <fullName evidence="1">L-threonine 3-dehydrogenase</fullName>
        <shortName evidence="1">TDH</shortName>
        <ecNumber evidence="1">1.1.1.103</ecNumber>
    </recommendedName>
</protein>
<name>TDH_XANC8</name>
<reference key="1">
    <citation type="journal article" date="2005" name="Genome Res.">
        <title>Comparative and functional genomic analyses of the pathogenicity of phytopathogen Xanthomonas campestris pv. campestris.</title>
        <authorList>
            <person name="Qian W."/>
            <person name="Jia Y."/>
            <person name="Ren S.-X."/>
            <person name="He Y.-Q."/>
            <person name="Feng J.-X."/>
            <person name="Lu L.-F."/>
            <person name="Sun Q."/>
            <person name="Ying G."/>
            <person name="Tang D.-J."/>
            <person name="Tang H."/>
            <person name="Wu W."/>
            <person name="Hao P."/>
            <person name="Wang L."/>
            <person name="Jiang B.-L."/>
            <person name="Zeng S."/>
            <person name="Gu W.-Y."/>
            <person name="Lu G."/>
            <person name="Rong L."/>
            <person name="Tian Y."/>
            <person name="Yao Z."/>
            <person name="Fu G."/>
            <person name="Chen B."/>
            <person name="Fang R."/>
            <person name="Qiang B."/>
            <person name="Chen Z."/>
            <person name="Zhao G.-P."/>
            <person name="Tang J.-L."/>
            <person name="He C."/>
        </authorList>
    </citation>
    <scope>NUCLEOTIDE SEQUENCE [LARGE SCALE GENOMIC DNA]</scope>
    <source>
        <strain>8004</strain>
    </source>
</reference>
<accession>Q4URI9</accession>
<gene>
    <name evidence="1" type="primary">tdh</name>
    <name type="ordered locus">XC_3290</name>
</gene>
<dbReference type="EC" id="1.1.1.103" evidence="1"/>
<dbReference type="EMBL" id="CP000050">
    <property type="protein sequence ID" value="AAY50334.1"/>
    <property type="molecule type" value="Genomic_DNA"/>
</dbReference>
<dbReference type="SMR" id="Q4URI9"/>
<dbReference type="KEGG" id="xcb:XC_3290"/>
<dbReference type="HOGENOM" id="CLU_026673_11_0_6"/>
<dbReference type="UniPathway" id="UPA00046">
    <property type="reaction ID" value="UER00505"/>
</dbReference>
<dbReference type="Proteomes" id="UP000000420">
    <property type="component" value="Chromosome"/>
</dbReference>
<dbReference type="GO" id="GO:0005737">
    <property type="term" value="C:cytoplasm"/>
    <property type="evidence" value="ECO:0007669"/>
    <property type="project" value="UniProtKB-SubCell"/>
</dbReference>
<dbReference type="GO" id="GO:0008743">
    <property type="term" value="F:L-threonine 3-dehydrogenase activity"/>
    <property type="evidence" value="ECO:0007669"/>
    <property type="project" value="UniProtKB-UniRule"/>
</dbReference>
<dbReference type="GO" id="GO:0008270">
    <property type="term" value="F:zinc ion binding"/>
    <property type="evidence" value="ECO:0007669"/>
    <property type="project" value="UniProtKB-UniRule"/>
</dbReference>
<dbReference type="GO" id="GO:0019518">
    <property type="term" value="P:L-threonine catabolic process to glycine"/>
    <property type="evidence" value="ECO:0007669"/>
    <property type="project" value="UniProtKB-UniPathway"/>
</dbReference>
<dbReference type="Gene3D" id="3.90.180.10">
    <property type="entry name" value="Medium-chain alcohol dehydrogenases, catalytic domain"/>
    <property type="match status" value="1"/>
</dbReference>
<dbReference type="Gene3D" id="3.40.50.720">
    <property type="entry name" value="NAD(P)-binding Rossmann-like Domain"/>
    <property type="match status" value="1"/>
</dbReference>
<dbReference type="HAMAP" id="MF_00627">
    <property type="entry name" value="Thr_dehydrog"/>
    <property type="match status" value="1"/>
</dbReference>
<dbReference type="InterPro" id="IPR013149">
    <property type="entry name" value="ADH-like_C"/>
</dbReference>
<dbReference type="InterPro" id="IPR013154">
    <property type="entry name" value="ADH-like_N"/>
</dbReference>
<dbReference type="InterPro" id="IPR002328">
    <property type="entry name" value="ADH_Zn_CS"/>
</dbReference>
<dbReference type="InterPro" id="IPR011032">
    <property type="entry name" value="GroES-like_sf"/>
</dbReference>
<dbReference type="InterPro" id="IPR004627">
    <property type="entry name" value="L-Threonine_3-DHase"/>
</dbReference>
<dbReference type="InterPro" id="IPR036291">
    <property type="entry name" value="NAD(P)-bd_dom_sf"/>
</dbReference>
<dbReference type="InterPro" id="IPR020843">
    <property type="entry name" value="PKS_ER"/>
</dbReference>
<dbReference type="InterPro" id="IPR050129">
    <property type="entry name" value="Zn_alcohol_dh"/>
</dbReference>
<dbReference type="NCBIfam" id="NF003808">
    <property type="entry name" value="PRK05396.1"/>
    <property type="match status" value="1"/>
</dbReference>
<dbReference type="NCBIfam" id="TIGR00692">
    <property type="entry name" value="tdh"/>
    <property type="match status" value="1"/>
</dbReference>
<dbReference type="PANTHER" id="PTHR43401">
    <property type="entry name" value="L-THREONINE 3-DEHYDROGENASE"/>
    <property type="match status" value="1"/>
</dbReference>
<dbReference type="PANTHER" id="PTHR43401:SF2">
    <property type="entry name" value="L-THREONINE 3-DEHYDROGENASE"/>
    <property type="match status" value="1"/>
</dbReference>
<dbReference type="Pfam" id="PF08240">
    <property type="entry name" value="ADH_N"/>
    <property type="match status" value="1"/>
</dbReference>
<dbReference type="Pfam" id="PF00107">
    <property type="entry name" value="ADH_zinc_N"/>
    <property type="match status" value="1"/>
</dbReference>
<dbReference type="SMART" id="SM00829">
    <property type="entry name" value="PKS_ER"/>
    <property type="match status" value="1"/>
</dbReference>
<dbReference type="SUPFAM" id="SSF50129">
    <property type="entry name" value="GroES-like"/>
    <property type="match status" value="1"/>
</dbReference>
<dbReference type="SUPFAM" id="SSF51735">
    <property type="entry name" value="NAD(P)-binding Rossmann-fold domains"/>
    <property type="match status" value="1"/>
</dbReference>
<dbReference type="PROSITE" id="PS00059">
    <property type="entry name" value="ADH_ZINC"/>
    <property type="match status" value="1"/>
</dbReference>
<comment type="function">
    <text evidence="1">Catalyzes the NAD(+)-dependent oxidation of L-threonine to 2-amino-3-ketobutyrate.</text>
</comment>
<comment type="catalytic activity">
    <reaction evidence="1">
        <text>L-threonine + NAD(+) = (2S)-2-amino-3-oxobutanoate + NADH + H(+)</text>
        <dbReference type="Rhea" id="RHEA:13161"/>
        <dbReference type="ChEBI" id="CHEBI:15378"/>
        <dbReference type="ChEBI" id="CHEBI:57540"/>
        <dbReference type="ChEBI" id="CHEBI:57926"/>
        <dbReference type="ChEBI" id="CHEBI:57945"/>
        <dbReference type="ChEBI" id="CHEBI:78948"/>
        <dbReference type="EC" id="1.1.1.103"/>
    </reaction>
</comment>
<comment type="cofactor">
    <cofactor evidence="1">
        <name>Zn(2+)</name>
        <dbReference type="ChEBI" id="CHEBI:29105"/>
    </cofactor>
    <text evidence="1">Binds 2 Zn(2+) ions per subunit.</text>
</comment>
<comment type="pathway">
    <text evidence="1">Amino-acid degradation; L-threonine degradation via oxydo-reductase pathway; glycine from L-threonine: step 1/2.</text>
</comment>
<comment type="subunit">
    <text evidence="1">Homotetramer.</text>
</comment>
<comment type="subcellular location">
    <subcellularLocation>
        <location evidence="1">Cytoplasm</location>
    </subcellularLocation>
</comment>
<comment type="similarity">
    <text evidence="1">Belongs to the zinc-containing alcohol dehydrogenase family.</text>
</comment>